<evidence type="ECO:0000250" key="1">
    <source>
        <dbReference type="UniProtKB" id="A2RSY6"/>
    </source>
</evidence>
<evidence type="ECO:0000250" key="2">
    <source>
        <dbReference type="UniProtKB" id="O67010"/>
    </source>
</evidence>
<evidence type="ECO:0000250" key="3">
    <source>
        <dbReference type="UniProtKB" id="Q7Z2T5"/>
    </source>
</evidence>
<evidence type="ECO:0000255" key="4">
    <source>
        <dbReference type="PROSITE-ProRule" id="PRU00042"/>
    </source>
</evidence>
<evidence type="ECO:0000255" key="5">
    <source>
        <dbReference type="PROSITE-ProRule" id="PRU00958"/>
    </source>
</evidence>
<evidence type="ECO:0000256" key="6">
    <source>
        <dbReference type="SAM" id="MobiDB-lite"/>
    </source>
</evidence>
<evidence type="ECO:0000305" key="7"/>
<name>TRM1L_BOVIN</name>
<comment type="function">
    <text evidence="3">Specifically dimethylates a single guanine residue at position 27 of tRNA(Tyr) using S-adenosyl-L-methionine as donor of the methyl groups. Dimethylation at position 27 of tRNA(Tyr) is required for efficient translation of tyrosine codons. Also required to maintain 3-(3-amino-3-carboxypropyl)uridine (acp3U) in the D-loop of several cytoplasmic tRNAs.</text>
</comment>
<comment type="catalytic activity">
    <reaction evidence="3">
        <text>guanosine(27) in tRNA(Tyr) + 2 S-adenosyl-L-methionine = N(2)-dimethylguanosine(27) in tRNA(Tyr) + 2 S-adenosyl-L-homocysteine + 2 H(+)</text>
        <dbReference type="Rhea" id="RHEA:83895"/>
        <dbReference type="Rhea" id="RHEA-COMP:20240"/>
        <dbReference type="Rhea" id="RHEA-COMP:20241"/>
        <dbReference type="ChEBI" id="CHEBI:15378"/>
        <dbReference type="ChEBI" id="CHEBI:57856"/>
        <dbReference type="ChEBI" id="CHEBI:59789"/>
        <dbReference type="ChEBI" id="CHEBI:74269"/>
        <dbReference type="ChEBI" id="CHEBI:74513"/>
    </reaction>
    <physiologicalReaction direction="left-to-right" evidence="3">
        <dbReference type="Rhea" id="RHEA:83896"/>
    </physiologicalReaction>
</comment>
<comment type="subcellular location">
    <subcellularLocation>
        <location evidence="3">Nucleus</location>
        <location evidence="3">Nucleolus</location>
    </subcellularLocation>
</comment>
<comment type="similarity">
    <text evidence="5">Belongs to the class I-like SAM-binding methyltransferase superfamily. Trm1 family.</text>
</comment>
<accession>A5D7S3</accession>
<reference key="1">
    <citation type="submission" date="2007-04" db="EMBL/GenBank/DDBJ databases">
        <authorList>
            <consortium name="NIH - Mammalian Gene Collection (MGC) project"/>
        </authorList>
    </citation>
    <scope>NUCLEOTIDE SEQUENCE [LARGE SCALE MRNA]</scope>
    <source>
        <strain>Hereford</strain>
        <tissue>Fetal cerebellum</tissue>
    </source>
</reference>
<proteinExistence type="evidence at transcript level"/>
<organism>
    <name type="scientific">Bos taurus</name>
    <name type="common">Bovine</name>
    <dbReference type="NCBI Taxonomy" id="9913"/>
    <lineage>
        <taxon>Eukaryota</taxon>
        <taxon>Metazoa</taxon>
        <taxon>Chordata</taxon>
        <taxon>Craniata</taxon>
        <taxon>Vertebrata</taxon>
        <taxon>Euteleostomi</taxon>
        <taxon>Mammalia</taxon>
        <taxon>Eutheria</taxon>
        <taxon>Laurasiatheria</taxon>
        <taxon>Artiodactyla</taxon>
        <taxon>Ruminantia</taxon>
        <taxon>Pecora</taxon>
        <taxon>Bovidae</taxon>
        <taxon>Bovinae</taxon>
        <taxon>Bos</taxon>
    </lineage>
</organism>
<gene>
    <name type="primary">TRMT1L</name>
</gene>
<keyword id="KW-1017">Isopeptide bond</keyword>
<keyword id="KW-0479">Metal-binding</keyword>
<keyword id="KW-0489">Methyltransferase</keyword>
<keyword id="KW-0539">Nucleus</keyword>
<keyword id="KW-0597">Phosphoprotein</keyword>
<keyword id="KW-1185">Reference proteome</keyword>
<keyword id="KW-0694">RNA-binding</keyword>
<keyword id="KW-0949">S-adenosyl-L-methionine</keyword>
<keyword id="KW-0808">Transferase</keyword>
<keyword id="KW-0819">tRNA processing</keyword>
<keyword id="KW-0820">tRNA-binding</keyword>
<keyword id="KW-0832">Ubl conjugation</keyword>
<keyword id="KW-0862">Zinc</keyword>
<keyword id="KW-0863">Zinc-finger</keyword>
<dbReference type="EC" id="2.1.1.-" evidence="3"/>
<dbReference type="EMBL" id="BC140663">
    <property type="protein sequence ID" value="AAI40664.1"/>
    <property type="molecule type" value="mRNA"/>
</dbReference>
<dbReference type="RefSeq" id="NP_001091590.1">
    <property type="nucleotide sequence ID" value="NM_001098121.1"/>
</dbReference>
<dbReference type="SMR" id="A5D7S3"/>
<dbReference type="FunCoup" id="A5D7S3">
    <property type="interactions" value="1314"/>
</dbReference>
<dbReference type="STRING" id="9913.ENSBTAP00000063764"/>
<dbReference type="PaxDb" id="9913-ENSBTAP00000014994"/>
<dbReference type="Ensembl" id="ENSBTAT00000014994.5">
    <property type="protein sequence ID" value="ENSBTAP00000014994.5"/>
    <property type="gene ID" value="ENSBTAG00000011285.6"/>
</dbReference>
<dbReference type="GeneID" id="540872"/>
<dbReference type="KEGG" id="bta:540872"/>
<dbReference type="CTD" id="81627"/>
<dbReference type="VEuPathDB" id="HostDB:ENSBTAG00000011285"/>
<dbReference type="VGNC" id="VGNC:36371">
    <property type="gene designation" value="TRMT1L"/>
</dbReference>
<dbReference type="eggNOG" id="KOG1253">
    <property type="taxonomic scope" value="Eukaryota"/>
</dbReference>
<dbReference type="GeneTree" id="ENSGT00530000063646"/>
<dbReference type="InParanoid" id="A5D7S3"/>
<dbReference type="OrthoDB" id="6349953at2759"/>
<dbReference type="Proteomes" id="UP000009136">
    <property type="component" value="Chromosome 16"/>
</dbReference>
<dbReference type="Bgee" id="ENSBTAG00000011285">
    <property type="expression patterns" value="Expressed in spermatid and 107 other cell types or tissues"/>
</dbReference>
<dbReference type="GO" id="GO:0005730">
    <property type="term" value="C:nucleolus"/>
    <property type="evidence" value="ECO:0000250"/>
    <property type="project" value="UniProtKB"/>
</dbReference>
<dbReference type="GO" id="GO:0005634">
    <property type="term" value="C:nucleus"/>
    <property type="evidence" value="ECO:0000250"/>
    <property type="project" value="UniProtKB"/>
</dbReference>
<dbReference type="GO" id="GO:0016423">
    <property type="term" value="F:tRNA (guanine) methyltransferase activity"/>
    <property type="evidence" value="ECO:0007669"/>
    <property type="project" value="InterPro"/>
</dbReference>
<dbReference type="GO" id="GO:0000049">
    <property type="term" value="F:tRNA binding"/>
    <property type="evidence" value="ECO:0007669"/>
    <property type="project" value="UniProtKB-KW"/>
</dbReference>
<dbReference type="GO" id="GO:0008270">
    <property type="term" value="F:zinc ion binding"/>
    <property type="evidence" value="ECO:0007669"/>
    <property type="project" value="UniProtKB-KW"/>
</dbReference>
<dbReference type="GO" id="GO:0002940">
    <property type="term" value="P:tRNA N2-guanine methylation"/>
    <property type="evidence" value="ECO:0000318"/>
    <property type="project" value="GO_Central"/>
</dbReference>
<dbReference type="FunFam" id="3.40.50.150:FF:000098">
    <property type="entry name" value="Trmt1-like isoform 1"/>
    <property type="match status" value="1"/>
</dbReference>
<dbReference type="FunFam" id="3.30.56.70:FF:000001">
    <property type="entry name" value="tRNA (guanine(26)-N(2))-dimethyltransferase"/>
    <property type="match status" value="1"/>
</dbReference>
<dbReference type="Gene3D" id="3.30.56.70">
    <property type="entry name" value="N2,N2-dimethylguanosine tRNA methyltransferase, C-terminal domain"/>
    <property type="match status" value="1"/>
</dbReference>
<dbReference type="Gene3D" id="3.40.50.150">
    <property type="entry name" value="Vaccinia Virus protein VP39"/>
    <property type="match status" value="1"/>
</dbReference>
<dbReference type="InterPro" id="IPR029063">
    <property type="entry name" value="SAM-dependent_MTases_sf"/>
</dbReference>
<dbReference type="InterPro" id="IPR002905">
    <property type="entry name" value="Trm1"/>
</dbReference>
<dbReference type="InterPro" id="IPR042296">
    <property type="entry name" value="tRNA_met_Trm1_C"/>
</dbReference>
<dbReference type="InterPro" id="IPR013087">
    <property type="entry name" value="Znf_C2H2_type"/>
</dbReference>
<dbReference type="PANTHER" id="PTHR10631">
    <property type="entry name" value="N 2 ,N 2 -DIMETHYLGUANOSINE TRNA METHYLTRANSFERASE"/>
    <property type="match status" value="1"/>
</dbReference>
<dbReference type="PANTHER" id="PTHR10631:SF1">
    <property type="entry name" value="TRMT1-LIKE PROTEIN"/>
    <property type="match status" value="1"/>
</dbReference>
<dbReference type="Pfam" id="PF02005">
    <property type="entry name" value="TRM"/>
    <property type="match status" value="2"/>
</dbReference>
<dbReference type="SMART" id="SM00355">
    <property type="entry name" value="ZnF_C2H2"/>
    <property type="match status" value="2"/>
</dbReference>
<dbReference type="SUPFAM" id="SSF53335">
    <property type="entry name" value="S-adenosyl-L-methionine-dependent methyltransferases"/>
    <property type="match status" value="1"/>
</dbReference>
<dbReference type="PROSITE" id="PS51626">
    <property type="entry name" value="SAM_MT_TRM1"/>
    <property type="match status" value="1"/>
</dbReference>
<dbReference type="PROSITE" id="PS00028">
    <property type="entry name" value="ZINC_FINGER_C2H2_1"/>
    <property type="match status" value="1"/>
</dbReference>
<dbReference type="PROSITE" id="PS50157">
    <property type="entry name" value="ZINC_FINGER_C2H2_2"/>
    <property type="match status" value="1"/>
</dbReference>
<sequence length="737" mass="81813">MENMAEEELLPQEKVEVVQVPVPTPTPDSARVPAPAPDSAPVSASTPAPASAPTPASAPVPAPALAQASALSPSLASAPDEAESKRHISIQRQLADLEKLAFVTEGDCDSANSLNSDNLDAGNKQACPLCPKEKFRACNSHKLHRHLQNLHWKVSVEFEGYRMCICHLPCRPVKPNIIGEQISSKMGAHYHCIICSATITRRTDMLGHVRRHVNKGETKSRYIAASAAKPPKEILKEADTDVQVCPNYTVPQKTDSYFNPKMKLNRQLIFCTLAALAKERKPLECLDAFGATGIMGLQWAKHLGNAVKVTINDLNENSVTLIQENCHLNKLKVVVDSKEKEEREDILEEGEENLGNIKVTKMDANVLMHLRSFDFIHLDPFGTSVNYLDSAFRNIRNLGIVSVTSTDISSLYAKAQHVARRHYGCNIVRTEYYKELAARIVVAAVARAAARCNKGIEVLFAVALEHFVLVVVRVLRGPTSADETAKKIQYLIHCQWCEERIFQKDGNMVEENPYRQLPCNCHGSMPGKTAIELGPLWSSSLFNTGFLKRMLSESLHHGLDDIQTLIKTLIFESECTPQFSVHAPSNLNKPEECGVFIKTTDDTTTDSHSAQGKRKSNETTANLVKRQKTDVNTEHPPFYYNIHRHSIKGMNMPKLKKFLCYLSQAGFRVSRTHFDPMGVRTDAPLMQFKSILLKYSTPTYTGGQSEGHVQPASEDTVADRVEMSVNDKAEAGGCRRW</sequence>
<feature type="chain" id="PRO_0000317567" description="tRNA (guanine(27)-N(2))-dimethyltransferase">
    <location>
        <begin position="1"/>
        <end position="737"/>
    </location>
</feature>
<feature type="domain" description="Trm1 methyltransferase" evidence="5">
    <location>
        <begin position="233"/>
        <end position="692"/>
    </location>
</feature>
<feature type="zinc finger region" description="C2H2-type" evidence="4">
    <location>
        <begin position="190"/>
        <end position="212"/>
    </location>
</feature>
<feature type="region of interest" description="Disordered" evidence="6">
    <location>
        <begin position="1"/>
        <end position="65"/>
    </location>
</feature>
<feature type="short sequence motif" description="Nucleolar localization signal" evidence="3">
    <location>
        <begin position="141"/>
        <end position="145"/>
    </location>
</feature>
<feature type="compositionally biased region" description="Acidic residues" evidence="6">
    <location>
        <begin position="1"/>
        <end position="10"/>
    </location>
</feature>
<feature type="compositionally biased region" description="Low complexity" evidence="6">
    <location>
        <begin position="17"/>
        <end position="49"/>
    </location>
</feature>
<feature type="compositionally biased region" description="Pro residues" evidence="6">
    <location>
        <begin position="50"/>
        <end position="62"/>
    </location>
</feature>
<feature type="binding site" evidence="2">
    <location>
        <position position="266"/>
    </location>
    <ligand>
        <name>S-adenosyl-L-methionine</name>
        <dbReference type="ChEBI" id="CHEBI:59789"/>
    </ligand>
</feature>
<feature type="binding site" evidence="2">
    <location>
        <position position="313"/>
    </location>
    <ligand>
        <name>S-adenosyl-L-methionine</name>
        <dbReference type="ChEBI" id="CHEBI:59789"/>
    </ligand>
</feature>
<feature type="binding site" evidence="2">
    <location>
        <position position="363"/>
    </location>
    <ligand>
        <name>S-adenosyl-L-methionine</name>
        <dbReference type="ChEBI" id="CHEBI:59789"/>
    </ligand>
</feature>
<feature type="binding site" evidence="2">
    <location>
        <position position="364"/>
    </location>
    <ligand>
        <name>S-adenosyl-L-methionine</name>
        <dbReference type="ChEBI" id="CHEBI:59789"/>
    </ligand>
</feature>
<feature type="binding site" evidence="2">
    <location>
        <position position="494"/>
    </location>
    <ligand>
        <name>Zn(2+)</name>
        <dbReference type="ChEBI" id="CHEBI:29105"/>
    </ligand>
</feature>
<feature type="binding site" evidence="2">
    <location>
        <position position="497"/>
    </location>
    <ligand>
        <name>Zn(2+)</name>
        <dbReference type="ChEBI" id="CHEBI:29105"/>
    </ligand>
</feature>
<feature type="binding site" evidence="2">
    <location>
        <position position="519"/>
    </location>
    <ligand>
        <name>Zn(2+)</name>
        <dbReference type="ChEBI" id="CHEBI:29105"/>
    </ligand>
</feature>
<feature type="binding site" evidence="2">
    <location>
        <position position="521"/>
    </location>
    <ligand>
        <name>Zn(2+)</name>
        <dbReference type="ChEBI" id="CHEBI:29105"/>
    </ligand>
</feature>
<feature type="modified residue" description="Phosphothreonine" evidence="3">
    <location>
        <position position="24"/>
    </location>
</feature>
<feature type="modified residue" description="Phosphoserine" evidence="3">
    <location>
        <position position="72"/>
    </location>
</feature>
<feature type="modified residue" description="Phosphoserine" evidence="3">
    <location>
        <position position="616"/>
    </location>
</feature>
<feature type="cross-link" description="Glycyl lysine isopeptide (Lys-Gly) (interchain with G-Cter in SUMO2)" evidence="3">
    <location>
        <position position="589"/>
    </location>
</feature>
<protein>
    <recommendedName>
        <fullName evidence="7">tRNA (guanine(27)-N(2))-dimethyltransferase</fullName>
        <ecNumber evidence="3">2.1.1.-</ecNumber>
    </recommendedName>
    <alternativeName>
        <fullName evidence="1">tRNA methyltransferase 1-like protein</fullName>
        <shortName evidence="1">TRMT1-like protein</shortName>
    </alternativeName>
</protein>